<sequence>MEETPPPMQAGSKPHLEKLTLGVTRILESSPGVTEVSIIEKLPAERHMISSWEQKNNCVMPEDVRNFYLMTNGFHMTWSVKLDDHIIPLGSMVINGISKLTQLIQSSVYSLPNAPTLADLEDDSQEGNEDHQLEKPHFDCRSAIFELDSCGGNGKVCLVYKNGKPGLAHDTEIWFLDRALYWHFLTDTFTAYYRLLITHLGLPQWQYAFTSYGISPQAKQWFSMYKPITYNTSLLTEEPDTFVNKLDPSKVFKSKNKILIPKKKGPVQPVSGQKGPGPLAPPTSKPSAGCGNPVRK</sequence>
<accession>Q6AXS8</accession>
<reference key="1">
    <citation type="journal article" date="2004" name="Genome Res.">
        <title>The status, quality, and expansion of the NIH full-length cDNA project: the Mammalian Gene Collection (MGC).</title>
        <authorList>
            <consortium name="The MGC Project Team"/>
        </authorList>
    </citation>
    <scope>NUCLEOTIDE SEQUENCE [LARGE SCALE MRNA]</scope>
    <source>
        <tissue>Lung</tissue>
    </source>
</reference>
<feature type="chain" id="PRO_0000079306" description="Tubulin polyglutamylase complex subunit 2">
    <location>
        <begin position="1"/>
        <end position="296"/>
    </location>
</feature>
<feature type="region of interest" description="Disordered" evidence="2">
    <location>
        <begin position="257"/>
        <end position="296"/>
    </location>
</feature>
<comment type="function">
    <text evidence="1">Subunit of the tubulin polyglutamylase complex (TPGC). The complex mediates cilia and flagella polyglutamylation which is essential for their biogenesis and motility.</text>
</comment>
<comment type="subunit">
    <text evidence="1">Part of the neuronal tubulin polyglutamylase complex which contains TPGS1, TPGS2, TTLL1, LRRC49 and NICN1. Interacts with CSTPP1 and LRRC49.</text>
</comment>
<comment type="subcellular location">
    <subcellularLocation>
        <location evidence="1">Cytoplasm</location>
        <location evidence="1">Cytoskeleton</location>
    </subcellularLocation>
    <subcellularLocation>
        <location evidence="1">Cytoplasm</location>
        <location evidence="1">Cytoskeleton</location>
        <location evidence="1">Microtubule organizing center</location>
        <location evidence="1">Centrosome</location>
        <location evidence="1">Centriolar satellite</location>
    </subcellularLocation>
    <text evidence="1">Associated with microtubules.</text>
</comment>
<comment type="sequence caution" evidence="3">
    <conflict type="erroneous initiation">
        <sequence resource="EMBL-CDS" id="AAH79332"/>
    </conflict>
    <text>Truncated N-terminus.</text>
</comment>
<dbReference type="EMBL" id="BC079332">
    <property type="protein sequence ID" value="AAH79332.1"/>
    <property type="status" value="ALT_INIT"/>
    <property type="molecule type" value="mRNA"/>
</dbReference>
<dbReference type="RefSeq" id="NP_001014169.2">
    <property type="nucleotide sequence ID" value="NM_001014147.1"/>
</dbReference>
<dbReference type="FunCoup" id="Q6AXS8">
    <property type="interactions" value="1419"/>
</dbReference>
<dbReference type="STRING" id="10116.ENSRNOP00000070604"/>
<dbReference type="PhosphoSitePlus" id="Q6AXS8"/>
<dbReference type="PaxDb" id="10116-ENSRNOP00000020148"/>
<dbReference type="DNASU" id="361301"/>
<dbReference type="Ensembl" id="ENSRNOT00000093690.2">
    <property type="protein sequence ID" value="ENSRNOP00000084578.1"/>
    <property type="gene ID" value="ENSRNOG00000054118.3"/>
</dbReference>
<dbReference type="GeneID" id="361301"/>
<dbReference type="KEGG" id="rno:361301"/>
<dbReference type="UCSC" id="RGD:1310571">
    <property type="organism name" value="rat"/>
</dbReference>
<dbReference type="AGR" id="RGD:1310571"/>
<dbReference type="CTD" id="25941"/>
<dbReference type="RGD" id="1310571">
    <property type="gene designation" value="Tpgs2"/>
</dbReference>
<dbReference type="eggNOG" id="ENOG502R21Z">
    <property type="taxonomic scope" value="Eukaryota"/>
</dbReference>
<dbReference type="GeneTree" id="ENSGT00390000018344"/>
<dbReference type="InParanoid" id="Q6AXS8"/>
<dbReference type="OMA" id="WQCCVAG"/>
<dbReference type="OrthoDB" id="10249691at2759"/>
<dbReference type="PhylomeDB" id="Q6AXS8"/>
<dbReference type="PRO" id="PR:Q6AXS8"/>
<dbReference type="Proteomes" id="UP000002494">
    <property type="component" value="Chromosome 18"/>
</dbReference>
<dbReference type="GO" id="GO:0034451">
    <property type="term" value="C:centriolar satellite"/>
    <property type="evidence" value="ECO:0007669"/>
    <property type="project" value="UniProtKB-SubCell"/>
</dbReference>
<dbReference type="GO" id="GO:0005737">
    <property type="term" value="C:cytoplasm"/>
    <property type="evidence" value="ECO:0007669"/>
    <property type="project" value="UniProtKB-KW"/>
</dbReference>
<dbReference type="GO" id="GO:0005874">
    <property type="term" value="C:microtubule"/>
    <property type="evidence" value="ECO:0007669"/>
    <property type="project" value="UniProtKB-KW"/>
</dbReference>
<dbReference type="InterPro" id="IPR018958">
    <property type="entry name" value="Knr4/Smi1-like_dom"/>
</dbReference>
<dbReference type="InterPro" id="IPR037883">
    <property type="entry name" value="Knr4/Smi1-like_sf"/>
</dbReference>
<dbReference type="InterPro" id="IPR039231">
    <property type="entry name" value="TPGS2"/>
</dbReference>
<dbReference type="PANTHER" id="PTHR31854">
    <property type="entry name" value="TUBULIN POLYGLUTAMYLASE COMPLEX SUBUNIT 2"/>
    <property type="match status" value="1"/>
</dbReference>
<dbReference type="PANTHER" id="PTHR31854:SF2">
    <property type="entry name" value="TUBULIN POLYGLUTAMYLASE COMPLEX SUBUNIT 2"/>
    <property type="match status" value="1"/>
</dbReference>
<dbReference type="SMART" id="SM00860">
    <property type="entry name" value="SMI1_KNR4"/>
    <property type="match status" value="1"/>
</dbReference>
<dbReference type="SUPFAM" id="SSF160631">
    <property type="entry name" value="SMI1/KNR4-like"/>
    <property type="match status" value="1"/>
</dbReference>
<protein>
    <recommendedName>
        <fullName>Tubulin polyglutamylase complex subunit 2</fullName>
        <shortName>PGs2</shortName>
    </recommendedName>
</protein>
<keyword id="KW-0963">Cytoplasm</keyword>
<keyword id="KW-0206">Cytoskeleton</keyword>
<keyword id="KW-0493">Microtubule</keyword>
<keyword id="KW-1185">Reference proteome</keyword>
<gene>
    <name type="primary">Tpgs2</name>
</gene>
<organism>
    <name type="scientific">Rattus norvegicus</name>
    <name type="common">Rat</name>
    <dbReference type="NCBI Taxonomy" id="10116"/>
    <lineage>
        <taxon>Eukaryota</taxon>
        <taxon>Metazoa</taxon>
        <taxon>Chordata</taxon>
        <taxon>Craniata</taxon>
        <taxon>Vertebrata</taxon>
        <taxon>Euteleostomi</taxon>
        <taxon>Mammalia</taxon>
        <taxon>Eutheria</taxon>
        <taxon>Euarchontoglires</taxon>
        <taxon>Glires</taxon>
        <taxon>Rodentia</taxon>
        <taxon>Myomorpha</taxon>
        <taxon>Muroidea</taxon>
        <taxon>Muridae</taxon>
        <taxon>Murinae</taxon>
        <taxon>Rattus</taxon>
    </lineage>
</organism>
<name>TPGS2_RAT</name>
<proteinExistence type="evidence at transcript level"/>
<evidence type="ECO:0000250" key="1">
    <source>
        <dbReference type="UniProtKB" id="Q68CL5"/>
    </source>
</evidence>
<evidence type="ECO:0000256" key="2">
    <source>
        <dbReference type="SAM" id="MobiDB-lite"/>
    </source>
</evidence>
<evidence type="ECO:0000305" key="3"/>